<organism>
    <name type="scientific">Psychrobacter cryohalolentis (strain ATCC BAA-1226 / DSM 17306 / VKM B-2378 / K5)</name>
    <dbReference type="NCBI Taxonomy" id="335284"/>
    <lineage>
        <taxon>Bacteria</taxon>
        <taxon>Pseudomonadati</taxon>
        <taxon>Pseudomonadota</taxon>
        <taxon>Gammaproteobacteria</taxon>
        <taxon>Moraxellales</taxon>
        <taxon>Moraxellaceae</taxon>
        <taxon>Psychrobacter</taxon>
    </lineage>
</organism>
<proteinExistence type="inferred from homology"/>
<comment type="similarity">
    <text evidence="1">Belongs to the DNA glycosylase MPG family.</text>
</comment>
<gene>
    <name type="ordered locus">Pcryo_0162</name>
</gene>
<feature type="chain" id="PRO_0000265045" description="Putative 3-methyladenine DNA glycosylase">
    <location>
        <begin position="1"/>
        <end position="212"/>
    </location>
</feature>
<keyword id="KW-0227">DNA damage</keyword>
<keyword id="KW-0234">DNA repair</keyword>
<keyword id="KW-0378">Hydrolase</keyword>
<dbReference type="EC" id="3.2.2.-" evidence="1"/>
<dbReference type="EMBL" id="CP000323">
    <property type="protein sequence ID" value="ABE73946.1"/>
    <property type="molecule type" value="Genomic_DNA"/>
</dbReference>
<dbReference type="RefSeq" id="WP_011512536.1">
    <property type="nucleotide sequence ID" value="NC_007969.1"/>
</dbReference>
<dbReference type="SMR" id="Q1QEF7"/>
<dbReference type="STRING" id="335284.Pcryo_0162"/>
<dbReference type="KEGG" id="pcr:Pcryo_0162"/>
<dbReference type="eggNOG" id="COG2094">
    <property type="taxonomic scope" value="Bacteria"/>
</dbReference>
<dbReference type="HOGENOM" id="CLU_060471_0_2_6"/>
<dbReference type="Proteomes" id="UP000002425">
    <property type="component" value="Chromosome"/>
</dbReference>
<dbReference type="GO" id="GO:0003905">
    <property type="term" value="F:alkylbase DNA N-glycosylase activity"/>
    <property type="evidence" value="ECO:0007669"/>
    <property type="project" value="InterPro"/>
</dbReference>
<dbReference type="GO" id="GO:0003677">
    <property type="term" value="F:DNA binding"/>
    <property type="evidence" value="ECO:0007669"/>
    <property type="project" value="InterPro"/>
</dbReference>
<dbReference type="GO" id="GO:0006284">
    <property type="term" value="P:base-excision repair"/>
    <property type="evidence" value="ECO:0007669"/>
    <property type="project" value="InterPro"/>
</dbReference>
<dbReference type="CDD" id="cd00540">
    <property type="entry name" value="AAG"/>
    <property type="match status" value="1"/>
</dbReference>
<dbReference type="Gene3D" id="3.10.300.10">
    <property type="entry name" value="Methylpurine-DNA glycosylase (MPG)"/>
    <property type="match status" value="1"/>
</dbReference>
<dbReference type="HAMAP" id="MF_00527">
    <property type="entry name" value="3MGH"/>
    <property type="match status" value="1"/>
</dbReference>
<dbReference type="InterPro" id="IPR011034">
    <property type="entry name" value="Formyl_transferase-like_C_sf"/>
</dbReference>
<dbReference type="InterPro" id="IPR003180">
    <property type="entry name" value="MPG"/>
</dbReference>
<dbReference type="InterPro" id="IPR036995">
    <property type="entry name" value="MPG_sf"/>
</dbReference>
<dbReference type="NCBIfam" id="TIGR00567">
    <property type="entry name" value="3mg"/>
    <property type="match status" value="1"/>
</dbReference>
<dbReference type="PANTHER" id="PTHR10429">
    <property type="entry name" value="DNA-3-METHYLADENINE GLYCOSYLASE"/>
    <property type="match status" value="1"/>
</dbReference>
<dbReference type="PANTHER" id="PTHR10429:SF0">
    <property type="entry name" value="DNA-3-METHYLADENINE GLYCOSYLASE"/>
    <property type="match status" value="1"/>
</dbReference>
<dbReference type="Pfam" id="PF02245">
    <property type="entry name" value="Pur_DNA_glyco"/>
    <property type="match status" value="1"/>
</dbReference>
<dbReference type="SUPFAM" id="SSF50486">
    <property type="entry name" value="FMT C-terminal domain-like"/>
    <property type="match status" value="1"/>
</dbReference>
<protein>
    <recommendedName>
        <fullName evidence="1">Putative 3-methyladenine DNA glycosylase</fullName>
        <ecNumber evidence="1">3.2.2.-</ecNumber>
    </recommendedName>
</protein>
<evidence type="ECO:0000255" key="1">
    <source>
        <dbReference type="HAMAP-Rule" id="MF_00527"/>
    </source>
</evidence>
<reference key="1">
    <citation type="submission" date="2006-03" db="EMBL/GenBank/DDBJ databases">
        <title>Complete sequence of chromosome of Psychrobacter cryohalolentis K5.</title>
        <authorList>
            <consortium name="US DOE Joint Genome Institute"/>
            <person name="Copeland A."/>
            <person name="Lucas S."/>
            <person name="Lapidus A."/>
            <person name="Barry K."/>
            <person name="Detter J.C."/>
            <person name="Glavina T."/>
            <person name="Hammon N."/>
            <person name="Israni S."/>
            <person name="Dalin E."/>
            <person name="Tice H."/>
            <person name="Pitluck S."/>
            <person name="Brettin T."/>
            <person name="Bruce D."/>
            <person name="Han C."/>
            <person name="Tapia R."/>
            <person name="Sims D.R."/>
            <person name="Gilna P."/>
            <person name="Schmutz J."/>
            <person name="Larimer F."/>
            <person name="Land M."/>
            <person name="Hauser L."/>
            <person name="Kyrpides N."/>
            <person name="Kim E."/>
            <person name="Richardson P."/>
        </authorList>
    </citation>
    <scope>NUCLEOTIDE SEQUENCE [LARGE SCALE GENOMIC DNA]</scope>
    <source>
        <strain>ATCC BAA-1226 / DSM 17306 / VKM B-2378 / K5</strain>
    </source>
</reference>
<accession>Q1QEF7</accession>
<name>3MGH_PSYCK</name>
<sequence length="212" mass="23511">MLASQVVSSVVKPSWFARPTCVVAADLIGKVLCRELTDSDGQQKILRMRISETEAYIGEGDAACHAHAGTRTPRTEIMYHIGGVFYVYLTYGIHHMLNLVSGPTESPEAVLIRAGFLIEGSARLMNEQLLDVNRQLNHIKQLAGPGKLTKGLQIDRTLYGKPITPASKVWVEDDGCQPLVSLRPRIGIDYAGDAKEWLLRYIWTDHPSLSKK</sequence>